<organism>
    <name type="scientific">Cutibacterium acnes (strain DSM 16379 / KPA171202)</name>
    <name type="common">Propionibacterium acnes</name>
    <dbReference type="NCBI Taxonomy" id="267747"/>
    <lineage>
        <taxon>Bacteria</taxon>
        <taxon>Bacillati</taxon>
        <taxon>Actinomycetota</taxon>
        <taxon>Actinomycetes</taxon>
        <taxon>Propionibacteriales</taxon>
        <taxon>Propionibacteriaceae</taxon>
        <taxon>Cutibacterium</taxon>
    </lineage>
</organism>
<reference key="1">
    <citation type="journal article" date="2004" name="Science">
        <title>The complete genome sequence of Propionibacterium acnes, a commensal of human skin.</title>
        <authorList>
            <person name="Brueggemann H."/>
            <person name="Henne A."/>
            <person name="Hoster F."/>
            <person name="Liesegang H."/>
            <person name="Wiezer A."/>
            <person name="Strittmatter A."/>
            <person name="Hujer S."/>
            <person name="Duerre P."/>
            <person name="Gottschalk G."/>
        </authorList>
    </citation>
    <scope>NUCLEOTIDE SEQUENCE [LARGE SCALE GENOMIC DNA]</scope>
    <source>
        <strain>DSM 16379 / KPA171202</strain>
    </source>
</reference>
<feature type="chain" id="PRO_0000229676" description="NAD kinase">
    <location>
        <begin position="1"/>
        <end position="318"/>
    </location>
</feature>
<feature type="active site" description="Proton acceptor" evidence="1">
    <location>
        <position position="84"/>
    </location>
</feature>
<feature type="binding site" evidence="1">
    <location>
        <begin position="84"/>
        <end position="85"/>
    </location>
    <ligand>
        <name>NAD(+)</name>
        <dbReference type="ChEBI" id="CHEBI:57540"/>
    </ligand>
</feature>
<feature type="binding site" evidence="1">
    <location>
        <position position="89"/>
    </location>
    <ligand>
        <name>NAD(+)</name>
        <dbReference type="ChEBI" id="CHEBI:57540"/>
    </ligand>
</feature>
<feature type="binding site" evidence="1">
    <location>
        <begin position="159"/>
        <end position="160"/>
    </location>
    <ligand>
        <name>NAD(+)</name>
        <dbReference type="ChEBI" id="CHEBI:57540"/>
    </ligand>
</feature>
<feature type="binding site" evidence="1">
    <location>
        <position position="170"/>
    </location>
    <ligand>
        <name>NAD(+)</name>
        <dbReference type="ChEBI" id="CHEBI:57540"/>
    </ligand>
</feature>
<feature type="binding site" evidence="1">
    <location>
        <position position="189"/>
    </location>
    <ligand>
        <name>NAD(+)</name>
        <dbReference type="ChEBI" id="CHEBI:57540"/>
    </ligand>
</feature>
<feature type="binding site" evidence="1">
    <location>
        <begin position="200"/>
        <end position="205"/>
    </location>
    <ligand>
        <name>NAD(+)</name>
        <dbReference type="ChEBI" id="CHEBI:57540"/>
    </ligand>
</feature>
<dbReference type="EC" id="2.7.1.23" evidence="1"/>
<dbReference type="EMBL" id="AE017283">
    <property type="protein sequence ID" value="AAT83146.1"/>
    <property type="molecule type" value="Genomic_DNA"/>
</dbReference>
<dbReference type="RefSeq" id="WP_002526374.1">
    <property type="nucleotide sequence ID" value="NZ_CP025935.1"/>
</dbReference>
<dbReference type="SMR" id="Q6A7W9"/>
<dbReference type="EnsemblBacteria" id="AAT83146">
    <property type="protein sequence ID" value="AAT83146"/>
    <property type="gene ID" value="PPA1395"/>
</dbReference>
<dbReference type="KEGG" id="pac:PPA1395"/>
<dbReference type="PATRIC" id="fig|267747.3.peg.1440"/>
<dbReference type="eggNOG" id="COG0061">
    <property type="taxonomic scope" value="Bacteria"/>
</dbReference>
<dbReference type="HOGENOM" id="CLU_008831_0_0_11"/>
<dbReference type="Proteomes" id="UP000000603">
    <property type="component" value="Chromosome"/>
</dbReference>
<dbReference type="GO" id="GO:0005737">
    <property type="term" value="C:cytoplasm"/>
    <property type="evidence" value="ECO:0007669"/>
    <property type="project" value="UniProtKB-SubCell"/>
</dbReference>
<dbReference type="GO" id="GO:0005524">
    <property type="term" value="F:ATP binding"/>
    <property type="evidence" value="ECO:0007669"/>
    <property type="project" value="UniProtKB-KW"/>
</dbReference>
<dbReference type="GO" id="GO:0046872">
    <property type="term" value="F:metal ion binding"/>
    <property type="evidence" value="ECO:0007669"/>
    <property type="project" value="UniProtKB-UniRule"/>
</dbReference>
<dbReference type="GO" id="GO:0051287">
    <property type="term" value="F:NAD binding"/>
    <property type="evidence" value="ECO:0007669"/>
    <property type="project" value="UniProtKB-ARBA"/>
</dbReference>
<dbReference type="GO" id="GO:0003951">
    <property type="term" value="F:NAD+ kinase activity"/>
    <property type="evidence" value="ECO:0007669"/>
    <property type="project" value="UniProtKB-UniRule"/>
</dbReference>
<dbReference type="GO" id="GO:0019674">
    <property type="term" value="P:NAD metabolic process"/>
    <property type="evidence" value="ECO:0007669"/>
    <property type="project" value="InterPro"/>
</dbReference>
<dbReference type="GO" id="GO:0006741">
    <property type="term" value="P:NADP biosynthetic process"/>
    <property type="evidence" value="ECO:0007669"/>
    <property type="project" value="UniProtKB-UniRule"/>
</dbReference>
<dbReference type="Gene3D" id="3.40.50.10330">
    <property type="entry name" value="Probable inorganic polyphosphate/atp-NAD kinase, domain 1"/>
    <property type="match status" value="1"/>
</dbReference>
<dbReference type="Gene3D" id="2.60.200.30">
    <property type="entry name" value="Probable inorganic polyphosphate/atp-NAD kinase, domain 2"/>
    <property type="match status" value="1"/>
</dbReference>
<dbReference type="HAMAP" id="MF_00361">
    <property type="entry name" value="NAD_kinase"/>
    <property type="match status" value="1"/>
</dbReference>
<dbReference type="InterPro" id="IPR017438">
    <property type="entry name" value="ATP-NAD_kinase_N"/>
</dbReference>
<dbReference type="InterPro" id="IPR017437">
    <property type="entry name" value="ATP-NAD_kinase_PpnK-typ_C"/>
</dbReference>
<dbReference type="InterPro" id="IPR016064">
    <property type="entry name" value="NAD/diacylglycerol_kinase_sf"/>
</dbReference>
<dbReference type="InterPro" id="IPR002504">
    <property type="entry name" value="NADK"/>
</dbReference>
<dbReference type="NCBIfam" id="NF002892">
    <property type="entry name" value="PRK03372.1"/>
    <property type="match status" value="1"/>
</dbReference>
<dbReference type="PANTHER" id="PTHR20275">
    <property type="entry name" value="NAD KINASE"/>
    <property type="match status" value="1"/>
</dbReference>
<dbReference type="PANTHER" id="PTHR20275:SF0">
    <property type="entry name" value="NAD KINASE"/>
    <property type="match status" value="1"/>
</dbReference>
<dbReference type="Pfam" id="PF01513">
    <property type="entry name" value="NAD_kinase"/>
    <property type="match status" value="1"/>
</dbReference>
<dbReference type="Pfam" id="PF20143">
    <property type="entry name" value="NAD_kinase_C"/>
    <property type="match status" value="1"/>
</dbReference>
<dbReference type="SUPFAM" id="SSF111331">
    <property type="entry name" value="NAD kinase/diacylglycerol kinase-like"/>
    <property type="match status" value="1"/>
</dbReference>
<sequence length="318" mass="34945">MGRYCGLVNDTSPSRYVVVVTHATRDDAFDAAAEFISEMAGRDIGCAVPDDQAKPMSSKLPGIDLESLGEFAHEAEVVVVFGGDGTILRAAEWSLPRHVPMIGVNLGHVGFLAELERSDMADLVNKVCSRDYTVEDRLVLKTTVTEHSGQHRWSSFAVNELSLEKAARRRMLDVLASVDELPVQRWSCDGILVSTPTGSTAYAFSAGGPVMWPDLDAMLMVPLSAHALFARPLVMSPAARVDLDIQPDGSESAVLWCDGRRSCTVRPGERITVVRHPDRLRIARLAAQPFTSRLVKKFELPVSGWRQGRDRHHLEETS</sequence>
<gene>
    <name evidence="1" type="primary">nadK</name>
    <name type="ordered locus">PPA1395</name>
</gene>
<evidence type="ECO:0000255" key="1">
    <source>
        <dbReference type="HAMAP-Rule" id="MF_00361"/>
    </source>
</evidence>
<proteinExistence type="inferred from homology"/>
<name>NADK_CUTAK</name>
<keyword id="KW-0067">ATP-binding</keyword>
<keyword id="KW-0963">Cytoplasm</keyword>
<keyword id="KW-0418">Kinase</keyword>
<keyword id="KW-0520">NAD</keyword>
<keyword id="KW-0521">NADP</keyword>
<keyword id="KW-0547">Nucleotide-binding</keyword>
<keyword id="KW-0808">Transferase</keyword>
<comment type="function">
    <text evidence="1">Involved in the regulation of the intracellular balance of NAD and NADP, and is a key enzyme in the biosynthesis of NADP. Catalyzes specifically the phosphorylation on 2'-hydroxyl of the adenosine moiety of NAD to yield NADP.</text>
</comment>
<comment type="catalytic activity">
    <reaction evidence="1">
        <text>NAD(+) + ATP = ADP + NADP(+) + H(+)</text>
        <dbReference type="Rhea" id="RHEA:18629"/>
        <dbReference type="ChEBI" id="CHEBI:15378"/>
        <dbReference type="ChEBI" id="CHEBI:30616"/>
        <dbReference type="ChEBI" id="CHEBI:57540"/>
        <dbReference type="ChEBI" id="CHEBI:58349"/>
        <dbReference type="ChEBI" id="CHEBI:456216"/>
        <dbReference type="EC" id="2.7.1.23"/>
    </reaction>
</comment>
<comment type="cofactor">
    <cofactor evidence="1">
        <name>a divalent metal cation</name>
        <dbReference type="ChEBI" id="CHEBI:60240"/>
    </cofactor>
</comment>
<comment type="subcellular location">
    <subcellularLocation>
        <location evidence="1">Cytoplasm</location>
    </subcellularLocation>
</comment>
<comment type="similarity">
    <text evidence="1">Belongs to the NAD kinase family.</text>
</comment>
<protein>
    <recommendedName>
        <fullName evidence="1">NAD kinase</fullName>
        <ecNumber evidence="1">2.7.1.23</ecNumber>
    </recommendedName>
    <alternativeName>
        <fullName evidence="1">ATP-dependent NAD kinase</fullName>
    </alternativeName>
</protein>
<accession>Q6A7W9</accession>